<geneLocation type="plasmid">
    <name>pYVe227</name>
</geneLocation>
<evidence type="ECO:0000255" key="1"/>
<evidence type="ECO:0000269" key="2">
    <source>
    </source>
</evidence>
<evidence type="ECO:0000269" key="3">
    <source>
    </source>
</evidence>
<evidence type="ECO:0000269" key="4">
    <source>
    </source>
</evidence>
<evidence type="ECO:0000269" key="5">
    <source>
    </source>
</evidence>
<evidence type="ECO:0000269" key="6">
    <source>
    </source>
</evidence>
<evidence type="ECO:0000269" key="7">
    <source>
    </source>
</evidence>
<evidence type="ECO:0000269" key="8">
    <source>
    </source>
</evidence>
<evidence type="ECO:0000303" key="9">
    <source>
    </source>
</evidence>
<evidence type="ECO:0000303" key="10">
    <source>
    </source>
</evidence>
<evidence type="ECO:0000303" key="11">
    <source>
    </source>
</evidence>
<evidence type="ECO:0000305" key="12"/>
<name>SCTE_YEREN</name>
<proteinExistence type="evidence at protein level"/>
<organism>
    <name type="scientific">Yersinia enterocolitica</name>
    <dbReference type="NCBI Taxonomy" id="630"/>
    <lineage>
        <taxon>Bacteria</taxon>
        <taxon>Pseudomonadati</taxon>
        <taxon>Pseudomonadota</taxon>
        <taxon>Gammaproteobacteria</taxon>
        <taxon>Enterobacterales</taxon>
        <taxon>Yersiniaceae</taxon>
        <taxon>Yersinia</taxon>
    </lineage>
</organism>
<sequence length="401" mass="41942">MSALITHDRSTPVTGSLVPYIETPAPAPLQTQQVAGELKDKNGGVSSQGVQLPAPLAVVASQVTEGQQQEITKLLESVTRGTAGSQLISNYVSVLTNFTLASPDTFEIELGKLVSNLEEVRKDIKIADIQRLHEQNMKKIEENQEKIKETEENAKQVKKSGMASKIFGWLIAIASVVIGAIMVASGVGAVAGAMMIASGVIGMANMAVKQAAEDGLISQEAMQVLGPILTAIEVALTVVSTVMTFGGSALKCLADIGAKLGANTASLAAKGAEFSAKVAQISTGISNTVGSAVTKLGGSFGSLTMSHVIRTGSQATQVAVGVGSGITQTINNKKQADLQHNNADLALNKADMAALQSIIDRLKEELSHLSESHRQVMELIFQMINAKGDMLHNLAGRPHTV</sequence>
<reference key="1">
    <citation type="journal article" date="1993" name="Infect. Immun.">
        <title>YopB and YopD constitute a novel class of Yersinia Yop proteins.</title>
        <authorList>
            <person name="Haakansson S."/>
            <person name="Bergman T."/>
            <person name="Vanooteghem J.-C."/>
            <person name="Cornelis G."/>
            <person name="Wolf-Watz H."/>
        </authorList>
    </citation>
    <scope>NUCLEOTIDE SEQUENCE [GENOMIC DNA]</scope>
    <source>
        <strain>W22703 / Serotype O:9 / Biotype 2</strain>
    </source>
</reference>
<reference key="2">
    <citation type="journal article" date="1998" name="FEMS Microbiol. Lett.">
        <title>In vitro association between the virulence proteins, YopD and YopE, of Yersinia enterocolitica.</title>
        <authorList>
            <person name="Hartland E.L."/>
            <person name="Robins-Browne R.M."/>
        </authorList>
    </citation>
    <scope>INTERACTION WITH YOPD/SCTB</scope>
    <source>
        <strain>W22703 / Serotype O:9 / Biotype 2</strain>
    </source>
</reference>
<reference key="3">
    <citation type="journal article" date="1999" name="EMBO J.">
        <title>Yersinia enterocolitica type III secretion-translocation system: channel formation by secreted Yops.</title>
        <authorList>
            <person name="Tardy F."/>
            <person name="Homble F."/>
            <person name="Neyt C."/>
            <person name="Wattiez R."/>
            <person name="Cornelis G.R."/>
            <person name="Ruysschaert J.M."/>
            <person name="Cabiaux V."/>
        </authorList>
    </citation>
    <scope>FUNCTION</scope>
    <scope>SUBUNIT</scope>
    <scope>DISRUPTION PHENOTYPE</scope>
    <source>
        <strain>E40 / Serotype O:9</strain>
    </source>
</reference>
<reference key="4">
    <citation type="journal article" date="1999" name="Mol. Microbiol.">
        <title>Type III machines of pathogenic yersiniae secrete virulence factors into the extracellular milieu.</title>
        <authorList>
            <person name="Lee V.T."/>
            <person name="Schneewind O."/>
        </authorList>
    </citation>
    <scope>FUNCTION</scope>
    <scope>SUBCELLULAR LOCATION</scope>
    <scope>DISRUPTION PHENOTYPE</scope>
    <source>
        <strain>W22703 / Serotype O:9 / Biotype 2</strain>
    </source>
</reference>
<reference key="5">
    <citation type="journal article" date="1999" name="Mol. Microbiol.">
        <title>Insertion of a Yop translocation pore into the macrophage plasma membrane by Yersinia enterocolitica: requirement for translocators YopB and YopD, but not LcrG.</title>
        <authorList>
            <person name="Neyt C."/>
            <person name="Cornelis G.R."/>
        </authorList>
    </citation>
    <scope>FUNCTION</scope>
    <scope>SUBUNIT</scope>
    <scope>SUBCELLULAR LOCATION</scope>
    <source>
        <strain>E40 / Serotype O:9</strain>
    </source>
</reference>
<reference key="6">
    <citation type="journal article" date="2001" name="Infect. Immun.">
        <title>YopB of Yersinia enterocolitica is essential for YopE translocation.</title>
        <authorList>
            <person name="Nordfelth R."/>
            <person name="Wolf-Watz H."/>
        </authorList>
    </citation>
    <scope>FUNCTION</scope>
    <scope>DISRUPTION PHENOTYPE</scope>
    <source>
        <strain>W22703 / Serotype O:9 / Biotype 2</strain>
    </source>
</reference>
<reference key="7">
    <citation type="journal article" date="2011" name="J. Bacteriol.">
        <title>Translocators YopB and YopD from Yersinia enterocolitica form a multimeric integral membrane complex in eukaryotic cell membranes.</title>
        <authorList>
            <person name="Montagner C."/>
            <person name="Arquint C."/>
            <person name="Cornelis G.R."/>
        </authorList>
    </citation>
    <scope>SUBUNIT</scope>
    <scope>INTERACTION WITH YOPD/SCTB</scope>
    <scope>SUBCELLULAR LOCATION</scope>
    <source>
        <strain>E40 / Serotype O:9</strain>
    </source>
</reference>
<reference key="8">
    <citation type="journal article" date="2018" name="FEMS Microbiol. Lett.">
        <title>Bacterial type III secretion systems: a complex device for the delivery of bacterial effector proteins into eukaryotic host cells.</title>
        <authorList>
            <person name="Wagner S."/>
            <person name="Grin I."/>
            <person name="Malmsheimer S."/>
            <person name="Singh N."/>
            <person name="Torres-Vargas C.E."/>
            <person name="Westerhausen S."/>
        </authorList>
    </citation>
    <scope>REVIEW</scope>
    <scope>NOMENCLATURE</scope>
    <scope>SUBUNIT</scope>
</reference>
<gene>
    <name evidence="10" type="primary">sctE</name>
    <name evidence="11" type="synonym">yopB</name>
</gene>
<protein>
    <recommendedName>
        <fullName evidence="12">Type 3 secretion system translocon protein SctE</fullName>
        <shortName evidence="12">T3SS translocon protein SctE</shortName>
    </recommendedName>
    <alternativeName>
        <fullName evidence="9">Translocator YopB</fullName>
    </alternativeName>
    <alternativeName>
        <fullName evidence="11">Yersinia outer protein B</fullName>
    </alternativeName>
</protein>
<comment type="function">
    <text evidence="2 3 4 5">Component of the type III secretion system (T3SS), also called injectisome, which is used to inject bacterial effector proteins into eukaryotic host cells (PubMed:10476031, PubMed:10581252). YopB/SctE and YopD/SctB are inserted into the host membrane where they form a pore and allow the translocation of effector proteins into the cytosol of target cells (PubMed:10476031, PubMed:10581252). Is an essential virulence determinant (PubMed:10209737). Required for YopE translocation (PubMed:11292787).</text>
</comment>
<comment type="function">
    <text evidence="2">Essential for the establishment of Yersinia infections in a mouse model system, but not for the targeting of effector Yops (PubMed:10209737). May modulate the host's immune response at a distance from the site of infection (PubMed:10209737).</text>
</comment>
<comment type="subunit">
    <text evidence="3 4 6 7 8">The core secretion machinery of the T3SS is composed of approximately 20 different proteins, including cytoplasmic components, a base, an export apparatus and a needle (PubMed:30107569). This subunit is involved in the formation of a pore, called the translocon, in host membrane (PubMed:10476031, PubMed:10581252, PubMed:22001511). Interacts with YopD/SctB (PubMed:22001511, PubMed:9627954). Together with YopD/SctB, forms a multimeric integral membrane complex with a mass of between 500 and 700 kDa (PubMed:22001511).</text>
</comment>
<comment type="subcellular location">
    <subcellularLocation>
        <location evidence="2">Secreted</location>
    </subcellularLocation>
    <subcellularLocation>
        <location evidence="3 6">Host membrane</location>
        <topology evidence="1">Multi-pass membrane protein</topology>
    </subcellularLocation>
    <text evidence="2 6">Secreted via the type III secretion system (T3SS) (PubMed:10209737). After export via the T3SS, YopB/SctE and YopD/SctB form a multimeric integral membrane complex in eukaryotic cell membranes (PubMed:22001511).</text>
</comment>
<comment type="disruption phenotype">
    <text evidence="2 4 5">Mutant displays reduced virulence in a mouse model system (PubMed:10209737). Although the mutation abolishes all YopB/SctE synthesis, it does not interfere with either type III secretion or type III targeting (PubMed:10209737). Deletion mutant cannot form channels in liposomes (PubMed:10581252). Mutant can secrete YopE during a HeLa cell infection but it is unable to translocate YopE into the HeLa cell (PubMed:11292787).</text>
</comment>
<comment type="similarity">
    <text evidence="12">Belongs to the SctE/SipB/YopB family.</text>
</comment>
<dbReference type="EMBL" id="AF102990">
    <property type="protein sequence ID" value="AAD16813.1"/>
    <property type="molecule type" value="Genomic_DNA"/>
</dbReference>
<dbReference type="RefSeq" id="NP_052390.1">
    <property type="nucleotide sequence ID" value="NC_002120.1"/>
</dbReference>
<dbReference type="SMR" id="P37131"/>
<dbReference type="DIP" id="DIP-60760N"/>
<dbReference type="IntAct" id="P37131">
    <property type="interactions" value="1"/>
</dbReference>
<dbReference type="GO" id="GO:0005576">
    <property type="term" value="C:extracellular region"/>
    <property type="evidence" value="ECO:0007669"/>
    <property type="project" value="UniProtKB-SubCell"/>
</dbReference>
<dbReference type="GO" id="GO:0033644">
    <property type="term" value="C:host cell membrane"/>
    <property type="evidence" value="ECO:0007669"/>
    <property type="project" value="UniProtKB-SubCell"/>
</dbReference>
<dbReference type="GO" id="GO:0016020">
    <property type="term" value="C:membrane"/>
    <property type="evidence" value="ECO:0007669"/>
    <property type="project" value="UniProtKB-KW"/>
</dbReference>
<dbReference type="InterPro" id="IPR006972">
    <property type="entry name" value="BipB-like_C"/>
</dbReference>
<dbReference type="Pfam" id="PF04888">
    <property type="entry name" value="SseC"/>
    <property type="match status" value="1"/>
</dbReference>
<keyword id="KW-0175">Coiled coil</keyword>
<keyword id="KW-1043">Host membrane</keyword>
<keyword id="KW-0472">Membrane</keyword>
<keyword id="KW-0614">Plasmid</keyword>
<keyword id="KW-0964">Secreted</keyword>
<keyword id="KW-0812">Transmembrane</keyword>
<keyword id="KW-1133">Transmembrane helix</keyword>
<keyword id="KW-0843">Virulence</keyword>
<accession>P37131</accession>
<feature type="chain" id="PRO_0000066361" description="Type 3 secretion system translocon protein SctE">
    <location>
        <begin position="1"/>
        <end position="401"/>
    </location>
</feature>
<feature type="transmembrane region" description="Helical" evidence="1">
    <location>
        <begin position="166"/>
        <end position="186"/>
    </location>
</feature>
<feature type="transmembrane region" description="Helical" evidence="1">
    <location>
        <begin position="225"/>
        <end position="245"/>
    </location>
</feature>
<feature type="coiled-coil region" evidence="1">
    <location>
        <begin position="129"/>
        <end position="160"/>
    </location>
</feature>
<feature type="coiled-coil region" evidence="1">
    <location>
        <begin position="345"/>
        <end position="379"/>
    </location>
</feature>